<proteinExistence type="predicted"/>
<evidence type="ECO:0000255" key="1"/>
<evidence type="ECO:0000305" key="2"/>
<accession>P43045</accession>
<accession>P43046</accession>
<accession>Q2SR06</accession>
<gene>
    <name type="ordered locus">MCAP_0865</name>
</gene>
<name>Y865_MYCCT</name>
<comment type="subcellular location">
    <subcellularLocation>
        <location evidence="2">Membrane</location>
        <topology evidence="2">Multi-pass membrane protein</topology>
    </subcellularLocation>
</comment>
<comment type="sequence caution" evidence="2">
    <conflict type="frameshift">
        <sequence resource="EMBL-CDS" id="BAA03624"/>
    </conflict>
</comment>
<organism>
    <name type="scientific">Mycoplasma capricolum subsp. capricolum (strain California kid / ATCC 27343 / NCTC 10154)</name>
    <dbReference type="NCBI Taxonomy" id="340047"/>
    <lineage>
        <taxon>Bacteria</taxon>
        <taxon>Bacillati</taxon>
        <taxon>Mycoplasmatota</taxon>
        <taxon>Mollicutes</taxon>
        <taxon>Mycoplasmataceae</taxon>
        <taxon>Mycoplasma</taxon>
    </lineage>
</organism>
<keyword id="KW-0472">Membrane</keyword>
<keyword id="KW-0812">Transmembrane</keyword>
<keyword id="KW-1133">Transmembrane helix</keyword>
<reference key="1">
    <citation type="journal article" date="1993" name="Nucleic Acids Res.">
        <title>Mapping of replication initiation site in Mycoplasma capricolum genome by two-dimensional gel-electrophoretic analysis.</title>
        <authorList>
            <person name="Miyata M."/>
            <person name="Sano K."/>
            <person name="Okada R."/>
            <person name="Fukumura T."/>
        </authorList>
    </citation>
    <scope>NUCLEOTIDE SEQUENCE [GENOMIC DNA]</scope>
</reference>
<reference key="2">
    <citation type="submission" date="2005-09" db="EMBL/GenBank/DDBJ databases">
        <authorList>
            <person name="Glass J.I."/>
            <person name="Lartigue C."/>
            <person name="Pfannkoch C."/>
            <person name="Baden-Tillson H."/>
            <person name="Smith H.O."/>
            <person name="Venter J.C."/>
            <person name="Roske K."/>
            <person name="Wise K.S."/>
            <person name="Calcutt M.J."/>
            <person name="Nelson W.C."/>
            <person name="Nierman W.C."/>
        </authorList>
    </citation>
    <scope>NUCLEOTIDE SEQUENCE [LARGE SCALE GENOMIC DNA]</scope>
    <source>
        <strain>California kid / ATCC 27343 / NCTC 10154</strain>
    </source>
</reference>
<sequence>MNNQFKLKNKKIKPVSILIILFVGFLFLISLIGFIFTSFYTIDLKLAIFFEKGFKYEIVRYWSIFYDILGTTELMVFILFNIMVLIESWFLLKSKTKKDNFWKKNKWILKLVYITVYVVFVVIKCITTYFKINADNGFGYGGDAIYLLSSKYRNICLIVSLVIHCIGLFVGFYIIHYKFKNDPIYLVDKYWIQAVKILFIVLISYTILVLLKGMTSRPYYYNIIYGDLLKQVKLNGHNDWVDHYLNQSTFKHGFNIGDNKYANNIPGEWPWYRINGGLFRPDKNLVQFKHWFDWAFPSGHIGATLIVGCTFFYFLTNNQKLTPLKITLLALYFLHLVSMSFAIVVNRGHWVSDITFTYLWLLPLIFLTHFFNSFFKFKDIGCKKY</sequence>
<dbReference type="EMBL" id="D14982">
    <property type="protein sequence ID" value="BAA03623.1"/>
    <property type="status" value="ALT_FRAME"/>
    <property type="molecule type" value="Genomic_DNA"/>
</dbReference>
<dbReference type="EMBL" id="D14982">
    <property type="protein sequence ID" value="BAA03624.1"/>
    <property type="status" value="ALT_FRAME"/>
    <property type="molecule type" value="Genomic_DNA"/>
</dbReference>
<dbReference type="EMBL" id="CP000123">
    <property type="protein sequence ID" value="ABC01385.1"/>
    <property type="molecule type" value="Genomic_DNA"/>
</dbReference>
<dbReference type="PIR" id="S42125">
    <property type="entry name" value="S42125"/>
</dbReference>
<dbReference type="PIR" id="S42126">
    <property type="entry name" value="S42126"/>
</dbReference>
<dbReference type="KEGG" id="mcp:MCAP_0865"/>
<dbReference type="HOGENOM" id="CLU_735497_0_0_14"/>
<dbReference type="PhylomeDB" id="P43045"/>
<dbReference type="Proteomes" id="UP000001928">
    <property type="component" value="Chromosome"/>
</dbReference>
<dbReference type="GO" id="GO:0016020">
    <property type="term" value="C:membrane"/>
    <property type="evidence" value="ECO:0007669"/>
    <property type="project" value="UniProtKB-SubCell"/>
</dbReference>
<dbReference type="InterPro" id="IPR000326">
    <property type="entry name" value="P_Acid_Pase_2/haloperoxidase"/>
</dbReference>
<dbReference type="Pfam" id="PF01569">
    <property type="entry name" value="PAP2"/>
    <property type="match status" value="1"/>
</dbReference>
<protein>
    <recommendedName>
        <fullName>Uncharacterized protein MCAP_0865</fullName>
    </recommendedName>
    <alternativeName>
        <fullName>ORF R6/R7</fullName>
    </alternativeName>
</protein>
<feature type="chain" id="PRO_0000066470" description="Uncharacterized protein MCAP_0865">
    <location>
        <begin position="1"/>
        <end position="385"/>
    </location>
</feature>
<feature type="transmembrane region" description="Helical" evidence="1">
    <location>
        <begin position="17"/>
        <end position="37"/>
    </location>
</feature>
<feature type="transmembrane region" description="Helical" evidence="1">
    <location>
        <begin position="72"/>
        <end position="92"/>
    </location>
</feature>
<feature type="transmembrane region" description="Helical" evidence="1">
    <location>
        <begin position="107"/>
        <end position="127"/>
    </location>
</feature>
<feature type="transmembrane region" description="Helical" evidence="1">
    <location>
        <begin position="155"/>
        <end position="175"/>
    </location>
</feature>
<feature type="transmembrane region" description="Helical" evidence="1">
    <location>
        <begin position="191"/>
        <end position="211"/>
    </location>
</feature>
<feature type="transmembrane region" description="Helical" evidence="1">
    <location>
        <begin position="295"/>
        <end position="315"/>
    </location>
</feature>
<feature type="transmembrane region" description="Helical" evidence="1">
    <location>
        <begin position="326"/>
        <end position="346"/>
    </location>
</feature>
<feature type="transmembrane region" description="Helical" evidence="1">
    <location>
        <begin position="354"/>
        <end position="374"/>
    </location>
</feature>